<evidence type="ECO:0000250" key="1">
    <source>
        <dbReference type="UniProtKB" id="Q2FXT0"/>
    </source>
</evidence>
<evidence type="ECO:0000255" key="2">
    <source>
        <dbReference type="HAMAP-Rule" id="MF_00539"/>
    </source>
</evidence>
<evidence type="ECO:0000256" key="3">
    <source>
        <dbReference type="SAM" id="MobiDB-lite"/>
    </source>
</evidence>
<evidence type="ECO:0000305" key="4"/>
<comment type="PTM">
    <text evidence="1">The N-terminus is cleaved by ribosomal processing cysteine protease Prp.</text>
</comment>
<comment type="similarity">
    <text evidence="2">Belongs to the bacterial ribosomal protein bL27 family.</text>
</comment>
<sequence>MIMDLQFFSHHKGGGSTANGRNSAGRRLGTKAADGSVVTAGSILYRQRGTHINPGENVGRGNDDTLFALVDGVVKFERLGRDKRKVSVYPVAE</sequence>
<organism>
    <name type="scientific">Limosilactobacillus fermentum (strain NBRC 3956 / LMG 18251)</name>
    <name type="common">Lactobacillus fermentum</name>
    <dbReference type="NCBI Taxonomy" id="334390"/>
    <lineage>
        <taxon>Bacteria</taxon>
        <taxon>Bacillati</taxon>
        <taxon>Bacillota</taxon>
        <taxon>Bacilli</taxon>
        <taxon>Lactobacillales</taxon>
        <taxon>Lactobacillaceae</taxon>
        <taxon>Limosilactobacillus</taxon>
    </lineage>
</organism>
<dbReference type="EMBL" id="AP008937">
    <property type="protein sequence ID" value="BAG27603.1"/>
    <property type="molecule type" value="Genomic_DNA"/>
</dbReference>
<dbReference type="RefSeq" id="WP_003683800.1">
    <property type="nucleotide sequence ID" value="NC_010610.1"/>
</dbReference>
<dbReference type="SMR" id="B2GD71"/>
<dbReference type="GeneID" id="83714285"/>
<dbReference type="KEGG" id="lfe:LAF_1267"/>
<dbReference type="eggNOG" id="COG0211">
    <property type="taxonomic scope" value="Bacteria"/>
</dbReference>
<dbReference type="HOGENOM" id="CLU_095424_4_0_9"/>
<dbReference type="Proteomes" id="UP000001697">
    <property type="component" value="Chromosome"/>
</dbReference>
<dbReference type="GO" id="GO:0022625">
    <property type="term" value="C:cytosolic large ribosomal subunit"/>
    <property type="evidence" value="ECO:0007669"/>
    <property type="project" value="TreeGrafter"/>
</dbReference>
<dbReference type="GO" id="GO:0003735">
    <property type="term" value="F:structural constituent of ribosome"/>
    <property type="evidence" value="ECO:0007669"/>
    <property type="project" value="InterPro"/>
</dbReference>
<dbReference type="GO" id="GO:0006412">
    <property type="term" value="P:translation"/>
    <property type="evidence" value="ECO:0007669"/>
    <property type="project" value="UniProtKB-UniRule"/>
</dbReference>
<dbReference type="FunFam" id="2.40.50.100:FF:000004">
    <property type="entry name" value="50S ribosomal protein L27"/>
    <property type="match status" value="1"/>
</dbReference>
<dbReference type="Gene3D" id="2.40.50.100">
    <property type="match status" value="1"/>
</dbReference>
<dbReference type="HAMAP" id="MF_00539">
    <property type="entry name" value="Ribosomal_bL27"/>
    <property type="match status" value="1"/>
</dbReference>
<dbReference type="InterPro" id="IPR001684">
    <property type="entry name" value="Ribosomal_bL27"/>
</dbReference>
<dbReference type="InterPro" id="IPR018261">
    <property type="entry name" value="Ribosomal_bL27_CS"/>
</dbReference>
<dbReference type="NCBIfam" id="TIGR00062">
    <property type="entry name" value="L27"/>
    <property type="match status" value="1"/>
</dbReference>
<dbReference type="PANTHER" id="PTHR15893:SF0">
    <property type="entry name" value="LARGE RIBOSOMAL SUBUNIT PROTEIN BL27M"/>
    <property type="match status" value="1"/>
</dbReference>
<dbReference type="PANTHER" id="PTHR15893">
    <property type="entry name" value="RIBOSOMAL PROTEIN L27"/>
    <property type="match status" value="1"/>
</dbReference>
<dbReference type="Pfam" id="PF01016">
    <property type="entry name" value="Ribosomal_L27"/>
    <property type="match status" value="1"/>
</dbReference>
<dbReference type="PRINTS" id="PR00063">
    <property type="entry name" value="RIBOSOMALL27"/>
</dbReference>
<dbReference type="SUPFAM" id="SSF110324">
    <property type="entry name" value="Ribosomal L27 protein-like"/>
    <property type="match status" value="1"/>
</dbReference>
<dbReference type="PROSITE" id="PS00831">
    <property type="entry name" value="RIBOSOMAL_L27"/>
    <property type="match status" value="1"/>
</dbReference>
<reference key="1">
    <citation type="journal article" date="2008" name="DNA Res.">
        <title>Comparative genome analysis of Lactobacillus reuteri and Lactobacillus fermentum reveal a genomic island for reuterin and cobalamin production.</title>
        <authorList>
            <person name="Morita H."/>
            <person name="Toh H."/>
            <person name="Fukuda S."/>
            <person name="Horikawa H."/>
            <person name="Oshima K."/>
            <person name="Suzuki T."/>
            <person name="Murakami M."/>
            <person name="Hisamatsu S."/>
            <person name="Kato Y."/>
            <person name="Takizawa T."/>
            <person name="Fukuoka H."/>
            <person name="Yoshimura T."/>
            <person name="Itoh K."/>
            <person name="O'Sullivan D.J."/>
            <person name="McKay L.L."/>
            <person name="Ohno H."/>
            <person name="Kikuchi J."/>
            <person name="Masaoka T."/>
            <person name="Hattori M."/>
        </authorList>
    </citation>
    <scope>NUCLEOTIDE SEQUENCE [LARGE SCALE GENOMIC DNA]</scope>
    <source>
        <strain>NBRC 3956 / LMG 18251</strain>
    </source>
</reference>
<gene>
    <name evidence="2" type="primary">rpmA</name>
    <name type="ordered locus">LAF_1267</name>
</gene>
<protein>
    <recommendedName>
        <fullName evidence="2">Large ribosomal subunit protein bL27</fullName>
    </recommendedName>
    <alternativeName>
        <fullName evidence="4">50S ribosomal protein L27</fullName>
    </alternativeName>
</protein>
<proteinExistence type="inferred from homology"/>
<name>RL27_LIMF3</name>
<feature type="propeptide" id="PRO_0000459900" evidence="1">
    <location>
        <begin position="1"/>
        <end position="8"/>
    </location>
</feature>
<feature type="chain" id="PRO_1000128764" description="Large ribosomal subunit protein bL27">
    <location>
        <begin position="9"/>
        <end position="93"/>
    </location>
</feature>
<feature type="region of interest" description="Disordered" evidence="3">
    <location>
        <begin position="8"/>
        <end position="29"/>
    </location>
</feature>
<accession>B2GD71</accession>
<keyword id="KW-1185">Reference proteome</keyword>
<keyword id="KW-0687">Ribonucleoprotein</keyword>
<keyword id="KW-0689">Ribosomal protein</keyword>